<proteinExistence type="inferred from homology"/>
<reference key="1">
    <citation type="journal article" date="2009" name="PLoS ONE">
        <title>Genome degradation in Brucella ovis corresponds with narrowing of its host range and tissue tropism.</title>
        <authorList>
            <person name="Tsolis R.M."/>
            <person name="Seshadri R."/>
            <person name="Santos R.L."/>
            <person name="Sangari F.J."/>
            <person name="Lobo J.M."/>
            <person name="de Jong M.F."/>
            <person name="Ren Q."/>
            <person name="Myers G."/>
            <person name="Brinkac L.M."/>
            <person name="Nelson W.C."/>
            <person name="Deboy R.T."/>
            <person name="Angiuoli S."/>
            <person name="Khouri H."/>
            <person name="Dimitrov G."/>
            <person name="Robinson J.R."/>
            <person name="Mulligan S."/>
            <person name="Walker R.L."/>
            <person name="Elzer P.E."/>
            <person name="Hassan K.A."/>
            <person name="Paulsen I.T."/>
        </authorList>
    </citation>
    <scope>NUCLEOTIDE SEQUENCE [LARGE SCALE GENOMIC DNA]</scope>
    <source>
        <strain>ATCC 25840 / 63/290 / NCTC 10512</strain>
    </source>
</reference>
<accession>A5VSQ3</accession>
<feature type="chain" id="PRO_1000082033" description="Succinate--CoA ligase [ADP-forming] subunit beta">
    <location>
        <begin position="1"/>
        <end position="398"/>
    </location>
</feature>
<feature type="domain" description="ATP-grasp" evidence="1">
    <location>
        <begin position="9"/>
        <end position="254"/>
    </location>
</feature>
<feature type="binding site" evidence="1">
    <location>
        <position position="46"/>
    </location>
    <ligand>
        <name>ATP</name>
        <dbReference type="ChEBI" id="CHEBI:30616"/>
    </ligand>
</feature>
<feature type="binding site" evidence="1">
    <location>
        <begin position="53"/>
        <end position="55"/>
    </location>
    <ligand>
        <name>ATP</name>
        <dbReference type="ChEBI" id="CHEBI:30616"/>
    </ligand>
</feature>
<feature type="binding site" evidence="1">
    <location>
        <position position="109"/>
    </location>
    <ligand>
        <name>ATP</name>
        <dbReference type="ChEBI" id="CHEBI:30616"/>
    </ligand>
</feature>
<feature type="binding site" evidence="1">
    <location>
        <position position="112"/>
    </location>
    <ligand>
        <name>ATP</name>
        <dbReference type="ChEBI" id="CHEBI:30616"/>
    </ligand>
</feature>
<feature type="binding site" evidence="1">
    <location>
        <position position="117"/>
    </location>
    <ligand>
        <name>ATP</name>
        <dbReference type="ChEBI" id="CHEBI:30616"/>
    </ligand>
</feature>
<feature type="binding site" evidence="1">
    <location>
        <position position="209"/>
    </location>
    <ligand>
        <name>Mg(2+)</name>
        <dbReference type="ChEBI" id="CHEBI:18420"/>
    </ligand>
</feature>
<feature type="binding site" evidence="1">
    <location>
        <position position="223"/>
    </location>
    <ligand>
        <name>Mg(2+)</name>
        <dbReference type="ChEBI" id="CHEBI:18420"/>
    </ligand>
</feature>
<feature type="binding site" evidence="1">
    <location>
        <position position="274"/>
    </location>
    <ligand>
        <name>substrate</name>
        <note>ligand shared with subunit alpha</note>
    </ligand>
</feature>
<feature type="binding site" evidence="1">
    <location>
        <begin position="331"/>
        <end position="333"/>
    </location>
    <ligand>
        <name>substrate</name>
        <note>ligand shared with subunit alpha</note>
    </ligand>
</feature>
<dbReference type="EC" id="6.2.1.5" evidence="1"/>
<dbReference type="EMBL" id="CP000708">
    <property type="protein sequence ID" value="ABQ61210.1"/>
    <property type="molecule type" value="Genomic_DNA"/>
</dbReference>
<dbReference type="RefSeq" id="WP_002964994.1">
    <property type="nucleotide sequence ID" value="NC_009505.1"/>
</dbReference>
<dbReference type="SMR" id="A5VSQ3"/>
<dbReference type="GeneID" id="97534788"/>
<dbReference type="KEGG" id="bov:BOV_1855"/>
<dbReference type="HOGENOM" id="CLU_037430_0_2_5"/>
<dbReference type="PhylomeDB" id="A5VSQ3"/>
<dbReference type="UniPathway" id="UPA00223">
    <property type="reaction ID" value="UER00999"/>
</dbReference>
<dbReference type="Proteomes" id="UP000006383">
    <property type="component" value="Chromosome I"/>
</dbReference>
<dbReference type="GO" id="GO:0005829">
    <property type="term" value="C:cytosol"/>
    <property type="evidence" value="ECO:0007669"/>
    <property type="project" value="TreeGrafter"/>
</dbReference>
<dbReference type="GO" id="GO:0042709">
    <property type="term" value="C:succinate-CoA ligase complex"/>
    <property type="evidence" value="ECO:0007669"/>
    <property type="project" value="TreeGrafter"/>
</dbReference>
<dbReference type="GO" id="GO:0005524">
    <property type="term" value="F:ATP binding"/>
    <property type="evidence" value="ECO:0007669"/>
    <property type="project" value="UniProtKB-UniRule"/>
</dbReference>
<dbReference type="GO" id="GO:0000287">
    <property type="term" value="F:magnesium ion binding"/>
    <property type="evidence" value="ECO:0007669"/>
    <property type="project" value="UniProtKB-UniRule"/>
</dbReference>
<dbReference type="GO" id="GO:0004775">
    <property type="term" value="F:succinate-CoA ligase (ADP-forming) activity"/>
    <property type="evidence" value="ECO:0007669"/>
    <property type="project" value="UniProtKB-UniRule"/>
</dbReference>
<dbReference type="GO" id="GO:0004776">
    <property type="term" value="F:succinate-CoA ligase (GDP-forming) activity"/>
    <property type="evidence" value="ECO:0007669"/>
    <property type="project" value="RHEA"/>
</dbReference>
<dbReference type="GO" id="GO:0006104">
    <property type="term" value="P:succinyl-CoA metabolic process"/>
    <property type="evidence" value="ECO:0007669"/>
    <property type="project" value="TreeGrafter"/>
</dbReference>
<dbReference type="GO" id="GO:0006099">
    <property type="term" value="P:tricarboxylic acid cycle"/>
    <property type="evidence" value="ECO:0007669"/>
    <property type="project" value="UniProtKB-UniRule"/>
</dbReference>
<dbReference type="FunFam" id="3.30.1490.20:FF:000002">
    <property type="entry name" value="Succinate--CoA ligase [ADP-forming] subunit beta"/>
    <property type="match status" value="1"/>
</dbReference>
<dbReference type="FunFam" id="3.30.470.20:FF:000002">
    <property type="entry name" value="Succinate--CoA ligase [ADP-forming] subunit beta"/>
    <property type="match status" value="1"/>
</dbReference>
<dbReference type="FunFam" id="3.40.50.261:FF:000001">
    <property type="entry name" value="Succinate--CoA ligase [ADP-forming] subunit beta"/>
    <property type="match status" value="1"/>
</dbReference>
<dbReference type="Gene3D" id="3.30.1490.20">
    <property type="entry name" value="ATP-grasp fold, A domain"/>
    <property type="match status" value="1"/>
</dbReference>
<dbReference type="Gene3D" id="3.30.470.20">
    <property type="entry name" value="ATP-grasp fold, B domain"/>
    <property type="match status" value="1"/>
</dbReference>
<dbReference type="Gene3D" id="3.40.50.261">
    <property type="entry name" value="Succinyl-CoA synthetase domains"/>
    <property type="match status" value="1"/>
</dbReference>
<dbReference type="HAMAP" id="MF_00558">
    <property type="entry name" value="Succ_CoA_beta"/>
    <property type="match status" value="1"/>
</dbReference>
<dbReference type="InterPro" id="IPR011761">
    <property type="entry name" value="ATP-grasp"/>
</dbReference>
<dbReference type="InterPro" id="IPR013650">
    <property type="entry name" value="ATP-grasp_succ-CoA_synth-type"/>
</dbReference>
<dbReference type="InterPro" id="IPR013815">
    <property type="entry name" value="ATP_grasp_subdomain_1"/>
</dbReference>
<dbReference type="InterPro" id="IPR017866">
    <property type="entry name" value="Succ-CoA_synthase_bsu_CS"/>
</dbReference>
<dbReference type="InterPro" id="IPR005811">
    <property type="entry name" value="SUCC_ACL_C"/>
</dbReference>
<dbReference type="InterPro" id="IPR005809">
    <property type="entry name" value="Succ_CoA_ligase-like_bsu"/>
</dbReference>
<dbReference type="InterPro" id="IPR016102">
    <property type="entry name" value="Succinyl-CoA_synth-like"/>
</dbReference>
<dbReference type="NCBIfam" id="NF001913">
    <property type="entry name" value="PRK00696.1"/>
    <property type="match status" value="1"/>
</dbReference>
<dbReference type="NCBIfam" id="TIGR01016">
    <property type="entry name" value="sucCoAbeta"/>
    <property type="match status" value="1"/>
</dbReference>
<dbReference type="PANTHER" id="PTHR11815:SF10">
    <property type="entry name" value="SUCCINATE--COA LIGASE [GDP-FORMING] SUBUNIT BETA, MITOCHONDRIAL"/>
    <property type="match status" value="1"/>
</dbReference>
<dbReference type="PANTHER" id="PTHR11815">
    <property type="entry name" value="SUCCINYL-COA SYNTHETASE BETA CHAIN"/>
    <property type="match status" value="1"/>
</dbReference>
<dbReference type="Pfam" id="PF08442">
    <property type="entry name" value="ATP-grasp_2"/>
    <property type="match status" value="1"/>
</dbReference>
<dbReference type="Pfam" id="PF00549">
    <property type="entry name" value="Ligase_CoA"/>
    <property type="match status" value="1"/>
</dbReference>
<dbReference type="PIRSF" id="PIRSF001554">
    <property type="entry name" value="SucCS_beta"/>
    <property type="match status" value="1"/>
</dbReference>
<dbReference type="SUPFAM" id="SSF56059">
    <property type="entry name" value="Glutathione synthetase ATP-binding domain-like"/>
    <property type="match status" value="1"/>
</dbReference>
<dbReference type="SUPFAM" id="SSF52210">
    <property type="entry name" value="Succinyl-CoA synthetase domains"/>
    <property type="match status" value="1"/>
</dbReference>
<dbReference type="PROSITE" id="PS50975">
    <property type="entry name" value="ATP_GRASP"/>
    <property type="match status" value="1"/>
</dbReference>
<dbReference type="PROSITE" id="PS01217">
    <property type="entry name" value="SUCCINYL_COA_LIG_3"/>
    <property type="match status" value="1"/>
</dbReference>
<keyword id="KW-0067">ATP-binding</keyword>
<keyword id="KW-0436">Ligase</keyword>
<keyword id="KW-0460">Magnesium</keyword>
<keyword id="KW-0479">Metal-binding</keyword>
<keyword id="KW-0547">Nucleotide-binding</keyword>
<keyword id="KW-0816">Tricarboxylic acid cycle</keyword>
<sequence length="398" mass="42527">MNIHEYQAKRLLHTYGAPIANGVAVYSVEQAEEWAKTLPGPLYVVKSQIHAGGRGKGKFKELPADAKGGVRLAKSVEEVVANAKEMLGNTLVTKQTGEAGKQVNRLYIEDGADIERELYLSILIDRSVGRPAFVVSTEGGMDIEAVAEETPEKIVTVAIDPAKGVTDEDANKLADALKLEGGAREDGLKLFPILYKAFTEKDMSLLEINPLIVMTNGRVRVLDAKVSFDNNALFRHPDIVELRDLTEEDPKEIEASKYDLAYVALDGNIGCMVNGAGLAMATMDIIKLYGAEPANFLDVGGGASKEKVTAAFKIITADPAVEGILVNIFGGIMKCDVIAEGVIAAVKEVGLKVPLVVRLEGTNVELGKKIINESGLNVISADDLDDAAQKIVAAVKGN</sequence>
<organism>
    <name type="scientific">Brucella ovis (strain ATCC 25840 / 63/290 / NCTC 10512)</name>
    <dbReference type="NCBI Taxonomy" id="444178"/>
    <lineage>
        <taxon>Bacteria</taxon>
        <taxon>Pseudomonadati</taxon>
        <taxon>Pseudomonadota</taxon>
        <taxon>Alphaproteobacteria</taxon>
        <taxon>Hyphomicrobiales</taxon>
        <taxon>Brucellaceae</taxon>
        <taxon>Brucella/Ochrobactrum group</taxon>
        <taxon>Brucella</taxon>
    </lineage>
</organism>
<comment type="function">
    <text evidence="1">Succinyl-CoA synthetase functions in the citric acid cycle (TCA), coupling the hydrolysis of succinyl-CoA to the synthesis of either ATP or GTP and thus represents the only step of substrate-level phosphorylation in the TCA. The beta subunit provides nucleotide specificity of the enzyme and binds the substrate succinate, while the binding sites for coenzyme A and phosphate are found in the alpha subunit.</text>
</comment>
<comment type="catalytic activity">
    <reaction evidence="1">
        <text>succinate + ATP + CoA = succinyl-CoA + ADP + phosphate</text>
        <dbReference type="Rhea" id="RHEA:17661"/>
        <dbReference type="ChEBI" id="CHEBI:30031"/>
        <dbReference type="ChEBI" id="CHEBI:30616"/>
        <dbReference type="ChEBI" id="CHEBI:43474"/>
        <dbReference type="ChEBI" id="CHEBI:57287"/>
        <dbReference type="ChEBI" id="CHEBI:57292"/>
        <dbReference type="ChEBI" id="CHEBI:456216"/>
        <dbReference type="EC" id="6.2.1.5"/>
    </reaction>
    <physiologicalReaction direction="right-to-left" evidence="1">
        <dbReference type="Rhea" id="RHEA:17663"/>
    </physiologicalReaction>
</comment>
<comment type="catalytic activity">
    <reaction evidence="1">
        <text>GTP + succinate + CoA = succinyl-CoA + GDP + phosphate</text>
        <dbReference type="Rhea" id="RHEA:22120"/>
        <dbReference type="ChEBI" id="CHEBI:30031"/>
        <dbReference type="ChEBI" id="CHEBI:37565"/>
        <dbReference type="ChEBI" id="CHEBI:43474"/>
        <dbReference type="ChEBI" id="CHEBI:57287"/>
        <dbReference type="ChEBI" id="CHEBI:57292"/>
        <dbReference type="ChEBI" id="CHEBI:58189"/>
    </reaction>
    <physiologicalReaction direction="right-to-left" evidence="1">
        <dbReference type="Rhea" id="RHEA:22122"/>
    </physiologicalReaction>
</comment>
<comment type="cofactor">
    <cofactor evidence="1">
        <name>Mg(2+)</name>
        <dbReference type="ChEBI" id="CHEBI:18420"/>
    </cofactor>
    <text evidence="1">Binds 1 Mg(2+) ion per subunit.</text>
</comment>
<comment type="pathway">
    <text evidence="1">Carbohydrate metabolism; tricarboxylic acid cycle; succinate from succinyl-CoA (ligase route): step 1/1.</text>
</comment>
<comment type="subunit">
    <text evidence="1">Heterotetramer of two alpha and two beta subunits.</text>
</comment>
<comment type="similarity">
    <text evidence="1">Belongs to the succinate/malate CoA ligase beta subunit family.</text>
</comment>
<gene>
    <name evidence="1" type="primary">sucC</name>
    <name type="ordered locus">BOV_1855</name>
</gene>
<protein>
    <recommendedName>
        <fullName evidence="1">Succinate--CoA ligase [ADP-forming] subunit beta</fullName>
        <ecNumber evidence="1">6.2.1.5</ecNumber>
    </recommendedName>
    <alternativeName>
        <fullName evidence="1">Succinyl-CoA synthetase subunit beta</fullName>
        <shortName evidence="1">SCS-beta</shortName>
    </alternativeName>
</protein>
<name>SUCC_BRUO2</name>
<evidence type="ECO:0000255" key="1">
    <source>
        <dbReference type="HAMAP-Rule" id="MF_00558"/>
    </source>
</evidence>